<protein>
    <recommendedName>
        <fullName>Ras-specific guanine nucleotide-releasing factor 1</fullName>
        <shortName>Ras-GRF1</shortName>
    </recommendedName>
    <alternativeName>
        <fullName>CDC25Mm</fullName>
    </alternativeName>
    <alternativeName>
        <fullName>Guanine nucleotide-releasing protein</fullName>
        <shortName>GNRP</shortName>
    </alternativeName>
    <alternativeName>
        <fullName>Ras-specific nucleotide exchange factor CDC25</fullName>
    </alternativeName>
</protein>
<feature type="chain" id="PRO_0000068881" description="Ras-specific guanine nucleotide-releasing factor 1">
    <location>
        <begin position="1"/>
        <end position="1262"/>
    </location>
</feature>
<feature type="domain" description="PH 1" evidence="6">
    <location>
        <begin position="22"/>
        <end position="130"/>
    </location>
</feature>
<feature type="domain" description="IQ" evidence="4">
    <location>
        <begin position="208"/>
        <end position="233"/>
    </location>
</feature>
<feature type="domain" description="DH" evidence="3">
    <location>
        <begin position="244"/>
        <end position="430"/>
    </location>
</feature>
<feature type="domain" description="PH 2" evidence="6">
    <location>
        <begin position="460"/>
        <end position="588"/>
    </location>
</feature>
<feature type="domain" description="N-terminal Ras-GEF" evidence="5">
    <location>
        <begin position="635"/>
        <end position="749"/>
    </location>
</feature>
<feature type="domain" description="Ras-GEF" evidence="7">
    <location>
        <begin position="1027"/>
        <end position="1259"/>
    </location>
</feature>
<feature type="region of interest" description="Disordered" evidence="8">
    <location>
        <begin position="714"/>
        <end position="738"/>
    </location>
</feature>
<feature type="region of interest" description="Disordered" evidence="8">
    <location>
        <begin position="800"/>
        <end position="854"/>
    </location>
</feature>
<feature type="compositionally biased region" description="Basic and acidic residues" evidence="8">
    <location>
        <begin position="821"/>
        <end position="839"/>
    </location>
</feature>
<feature type="modified residue" description="Phosphoserine; by PLK2" evidence="2">
    <location>
        <position position="71"/>
    </location>
</feature>
<feature type="modified residue" description="Phosphoserine; by PLK2" evidence="2">
    <location>
        <position position="581"/>
    </location>
</feature>
<feature type="modified residue" description="Phosphoserine; by PLK2" evidence="2">
    <location>
        <position position="617"/>
    </location>
</feature>
<feature type="modified residue" description="Phosphoserine" evidence="13">
    <location>
        <position position="745"/>
    </location>
</feature>
<feature type="modified residue" description="Phosphoserine; by PLK2" evidence="2">
    <location>
        <position position="766"/>
    </location>
</feature>
<feature type="mutagenesis site" description="Loss of function and oligomerization." evidence="9">
    <original>L</original>
    <variation>Q</variation>
    <location>
        <position position="263"/>
    </location>
</feature>
<feature type="mutagenesis site" description="Partial loss of function. No effect on oligomerization." evidence="9">
    <original>LTLHELL</original>
    <variation>IIIRDII</variation>
    <location>
        <begin position="394"/>
        <end position="400"/>
    </location>
</feature>
<feature type="sequence conflict" description="In Ref. 3." evidence="11" ref="3">
    <original>E</original>
    <variation>D</variation>
    <location>
        <position position="1033"/>
    </location>
</feature>
<feature type="helix" evidence="14">
    <location>
        <begin position="1028"/>
        <end position="1044"/>
    </location>
</feature>
<feature type="helix" evidence="14">
    <location>
        <begin position="1048"/>
        <end position="1057"/>
    </location>
</feature>
<feature type="helix" evidence="14">
    <location>
        <begin position="1061"/>
        <end position="1064"/>
    </location>
</feature>
<feature type="helix" evidence="14">
    <location>
        <begin position="1066"/>
        <end position="1087"/>
    </location>
</feature>
<feature type="helix" evidence="14">
    <location>
        <begin position="1092"/>
        <end position="1111"/>
    </location>
</feature>
<feature type="helix" evidence="14">
    <location>
        <begin position="1115"/>
        <end position="1125"/>
    </location>
</feature>
<feature type="helix" evidence="14">
    <location>
        <begin position="1128"/>
        <end position="1131"/>
    </location>
</feature>
<feature type="helix" evidence="14">
    <location>
        <begin position="1134"/>
        <end position="1138"/>
    </location>
</feature>
<feature type="helix" evidence="14">
    <location>
        <begin position="1142"/>
        <end position="1154"/>
    </location>
</feature>
<feature type="helix" evidence="14">
    <location>
        <begin position="1158"/>
        <end position="1169"/>
    </location>
</feature>
<feature type="helix" evidence="14">
    <location>
        <begin position="1179"/>
        <end position="1192"/>
    </location>
</feature>
<feature type="helix" evidence="14">
    <location>
        <begin position="1204"/>
        <end position="1222"/>
    </location>
</feature>
<feature type="helix" evidence="14">
    <location>
        <begin position="1231"/>
        <end position="1238"/>
    </location>
</feature>
<feature type="helix" evidence="14">
    <location>
        <begin position="1246"/>
        <end position="1256"/>
    </location>
</feature>
<name>RGRF1_MOUSE</name>
<organism>
    <name type="scientific">Mus musculus</name>
    <name type="common">Mouse</name>
    <dbReference type="NCBI Taxonomy" id="10090"/>
    <lineage>
        <taxon>Eukaryota</taxon>
        <taxon>Metazoa</taxon>
        <taxon>Chordata</taxon>
        <taxon>Craniata</taxon>
        <taxon>Vertebrata</taxon>
        <taxon>Euteleostomi</taxon>
        <taxon>Mammalia</taxon>
        <taxon>Eutheria</taxon>
        <taxon>Euarchontoglires</taxon>
        <taxon>Glires</taxon>
        <taxon>Rodentia</taxon>
        <taxon>Myomorpha</taxon>
        <taxon>Muroidea</taxon>
        <taxon>Muridae</taxon>
        <taxon>Murinae</taxon>
        <taxon>Mus</taxon>
        <taxon>Mus</taxon>
    </lineage>
</organism>
<gene>
    <name type="primary">Rasgrf1</name>
    <name type="synonym">Cdc25</name>
    <name type="synonym">Grf1</name>
</gene>
<keyword id="KW-0002">3D-structure</keyword>
<keyword id="KW-0344">Guanine-nucleotide releasing factor</keyword>
<keyword id="KW-0597">Phosphoprotein</keyword>
<keyword id="KW-1185">Reference proteome</keyword>
<keyword id="KW-0677">Repeat</keyword>
<keyword id="KW-0832">Ubl conjugation</keyword>
<dbReference type="EMBL" id="L20899">
    <property type="protein sequence ID" value="AAA02741.1"/>
    <property type="molecule type" value="mRNA"/>
</dbReference>
<dbReference type="EMBL" id="X59868">
    <property type="protein sequence ID" value="CAA42525.1"/>
    <property type="molecule type" value="mRNA"/>
</dbReference>
<dbReference type="CCDS" id="CCDS40722.1"/>
<dbReference type="PIR" id="S28407">
    <property type="entry name" value="S28407"/>
</dbReference>
<dbReference type="RefSeq" id="NP_035375.1">
    <property type="nucleotide sequence ID" value="NM_011245.2"/>
</dbReference>
<dbReference type="PDB" id="2IJE">
    <property type="method" value="X-ray"/>
    <property type="resolution" value="2.20 A"/>
    <property type="chains" value="S=1028-1262"/>
</dbReference>
<dbReference type="PDBsum" id="2IJE"/>
<dbReference type="SMR" id="P27671"/>
<dbReference type="BioGRID" id="202600">
    <property type="interactions" value="11"/>
</dbReference>
<dbReference type="CORUM" id="P27671"/>
<dbReference type="DIP" id="DIP-41194N"/>
<dbReference type="ELM" id="P27671"/>
<dbReference type="FunCoup" id="P27671">
    <property type="interactions" value="999"/>
</dbReference>
<dbReference type="IntAct" id="P27671">
    <property type="interactions" value="4"/>
</dbReference>
<dbReference type="MINT" id="P27671"/>
<dbReference type="STRING" id="10090.ENSMUSP00000034912"/>
<dbReference type="GlyGen" id="P27671">
    <property type="glycosylation" value="5 sites, 3 N-linked glycans (3 sites), 1 O-linked glycan (2 sites)"/>
</dbReference>
<dbReference type="iPTMnet" id="P27671"/>
<dbReference type="PhosphoSitePlus" id="P27671"/>
<dbReference type="PaxDb" id="10090-ENSMUSP00000034912"/>
<dbReference type="ProteomicsDB" id="254947"/>
<dbReference type="Antibodypedia" id="4170">
    <property type="antibodies" value="323 antibodies from 33 providers"/>
</dbReference>
<dbReference type="DNASU" id="19417"/>
<dbReference type="Ensembl" id="ENSMUST00000034912.6">
    <property type="protein sequence ID" value="ENSMUSP00000034912.5"/>
    <property type="gene ID" value="ENSMUSG00000032356.13"/>
</dbReference>
<dbReference type="GeneID" id="19417"/>
<dbReference type="KEGG" id="mmu:19417"/>
<dbReference type="UCSC" id="uc009qzt.1">
    <property type="organism name" value="mouse"/>
</dbReference>
<dbReference type="AGR" id="MGI:99694"/>
<dbReference type="CTD" id="5923"/>
<dbReference type="MGI" id="MGI:99694">
    <property type="gene designation" value="Rasgrf1"/>
</dbReference>
<dbReference type="VEuPathDB" id="HostDB:ENSMUSG00000032356"/>
<dbReference type="eggNOG" id="KOG3417">
    <property type="taxonomic scope" value="Eukaryota"/>
</dbReference>
<dbReference type="GeneTree" id="ENSGT00940000157599"/>
<dbReference type="HOGENOM" id="CLU_003405_0_1_1"/>
<dbReference type="InParanoid" id="P27671"/>
<dbReference type="OMA" id="SCNTNGY"/>
<dbReference type="OrthoDB" id="10254377at2759"/>
<dbReference type="PhylomeDB" id="P27671"/>
<dbReference type="TreeFam" id="TF317296"/>
<dbReference type="Reactome" id="R-MMU-5673001">
    <property type="pathway name" value="RAF/MAP kinase cascade"/>
</dbReference>
<dbReference type="BioGRID-ORCS" id="19417">
    <property type="hits" value="0 hits in 78 CRISPR screens"/>
</dbReference>
<dbReference type="ChiTaRS" id="Rasgrf1">
    <property type="organism name" value="mouse"/>
</dbReference>
<dbReference type="EvolutionaryTrace" id="P27671"/>
<dbReference type="PRO" id="PR:P27671"/>
<dbReference type="Proteomes" id="UP000000589">
    <property type="component" value="Chromosome 9"/>
</dbReference>
<dbReference type="RNAct" id="P27671">
    <property type="molecule type" value="protein"/>
</dbReference>
<dbReference type="Bgee" id="ENSMUSG00000032356">
    <property type="expression patterns" value="Expressed in pontine nuclear group and 134 other cell types or tissues"/>
</dbReference>
<dbReference type="ExpressionAtlas" id="P27671">
    <property type="expression patterns" value="baseline and differential"/>
</dbReference>
<dbReference type="GO" id="GO:0005829">
    <property type="term" value="C:cytosol"/>
    <property type="evidence" value="ECO:0000314"/>
    <property type="project" value="HGNC-UCL"/>
</dbReference>
<dbReference type="GO" id="GO:0030426">
    <property type="term" value="C:growth cone"/>
    <property type="evidence" value="ECO:0000314"/>
    <property type="project" value="HGNC-UCL"/>
</dbReference>
<dbReference type="GO" id="GO:0035254">
    <property type="term" value="F:glutamate receptor binding"/>
    <property type="evidence" value="ECO:0000353"/>
    <property type="project" value="MGI"/>
</dbReference>
<dbReference type="GO" id="GO:0005085">
    <property type="term" value="F:guanyl-nucleotide exchange factor activity"/>
    <property type="evidence" value="ECO:0007669"/>
    <property type="project" value="UniProtKB-KW"/>
</dbReference>
<dbReference type="GO" id="GO:0031175">
    <property type="term" value="P:neuron projection development"/>
    <property type="evidence" value="ECO:0000314"/>
    <property type="project" value="HGNC-UCL"/>
</dbReference>
<dbReference type="GO" id="GO:0043410">
    <property type="term" value="P:positive regulation of MAPK cascade"/>
    <property type="evidence" value="ECO:0000314"/>
    <property type="project" value="HGNC-UCL"/>
</dbReference>
<dbReference type="GO" id="GO:0035022">
    <property type="term" value="P:positive regulation of Rac protein signal transduction"/>
    <property type="evidence" value="ECO:0000314"/>
    <property type="project" value="HGNC-UCL"/>
</dbReference>
<dbReference type="GO" id="GO:0046579">
    <property type="term" value="P:positive regulation of Ras protein signal transduction"/>
    <property type="evidence" value="ECO:0000250"/>
    <property type="project" value="UniProtKB"/>
</dbReference>
<dbReference type="GO" id="GO:0048168">
    <property type="term" value="P:regulation of neuronal synaptic plasticity"/>
    <property type="evidence" value="ECO:0000315"/>
    <property type="project" value="MGI"/>
</dbReference>
<dbReference type="GO" id="GO:0046578">
    <property type="term" value="P:regulation of Ras protein signal transduction"/>
    <property type="evidence" value="ECO:0000314"/>
    <property type="project" value="HGNC-UCL"/>
</dbReference>
<dbReference type="GO" id="GO:0048167">
    <property type="term" value="P:regulation of synaptic plasticity"/>
    <property type="evidence" value="ECO:0000250"/>
    <property type="project" value="UniProtKB"/>
</dbReference>
<dbReference type="GO" id="GO:0034976">
    <property type="term" value="P:response to endoplasmic reticulum stress"/>
    <property type="evidence" value="ECO:0007669"/>
    <property type="project" value="Ensembl"/>
</dbReference>
<dbReference type="GO" id="GO:0007264">
    <property type="term" value="P:small GTPase-mediated signal transduction"/>
    <property type="evidence" value="ECO:0007669"/>
    <property type="project" value="InterPro"/>
</dbReference>
<dbReference type="GO" id="GO:0044342">
    <property type="term" value="P:type B pancreatic cell proliferation"/>
    <property type="evidence" value="ECO:0000315"/>
    <property type="project" value="MGI"/>
</dbReference>
<dbReference type="CDD" id="cd00155">
    <property type="entry name" value="RasGEF"/>
    <property type="match status" value="1"/>
</dbReference>
<dbReference type="CDD" id="cd00160">
    <property type="entry name" value="RhoGEF"/>
    <property type="match status" value="1"/>
</dbReference>
<dbReference type="FunFam" id="1.20.870.10:FF:000004">
    <property type="entry name" value="Ras-specific guanine nucleotide-releasing factor 1 isoform 2"/>
    <property type="match status" value="1"/>
</dbReference>
<dbReference type="FunFam" id="1.20.900.10:FF:000005">
    <property type="entry name" value="Ras-specific guanine nucleotide-releasing factor 1 isoform 2"/>
    <property type="match status" value="1"/>
</dbReference>
<dbReference type="FunFam" id="1.20.870.10:FF:000006">
    <property type="entry name" value="ras-specific guanine nucleotide-releasing factor 1 isoform X1"/>
    <property type="match status" value="1"/>
</dbReference>
<dbReference type="FunFam" id="2.30.29.30:FF:000117">
    <property type="entry name" value="ras-specific guanine nucleotide-releasing factor 1 isoform X2"/>
    <property type="match status" value="1"/>
</dbReference>
<dbReference type="FunFam" id="2.30.29.30:FF:000176">
    <property type="entry name" value="ras-specific guanine nucleotide-releasing factor 1 isoform X2"/>
    <property type="match status" value="1"/>
</dbReference>
<dbReference type="Gene3D" id="1.20.900.10">
    <property type="entry name" value="Dbl homology (DH) domain"/>
    <property type="match status" value="1"/>
</dbReference>
<dbReference type="Gene3D" id="2.30.29.30">
    <property type="entry name" value="Pleckstrin-homology domain (PH domain)/Phosphotyrosine-binding domain (PTB)"/>
    <property type="match status" value="2"/>
</dbReference>
<dbReference type="Gene3D" id="1.10.840.10">
    <property type="entry name" value="Ras guanine-nucleotide exchange factors catalytic domain"/>
    <property type="match status" value="1"/>
</dbReference>
<dbReference type="Gene3D" id="1.20.870.10">
    <property type="entry name" value="Son of sevenless (SoS) protein Chain: S domain 1"/>
    <property type="match status" value="2"/>
</dbReference>
<dbReference type="InterPro" id="IPR035899">
    <property type="entry name" value="DBL_dom_sf"/>
</dbReference>
<dbReference type="InterPro" id="IPR000219">
    <property type="entry name" value="DH_dom"/>
</dbReference>
<dbReference type="InterPro" id="IPR001331">
    <property type="entry name" value="GDS_CDC24_CS"/>
</dbReference>
<dbReference type="InterPro" id="IPR011993">
    <property type="entry name" value="PH-like_dom_sf"/>
</dbReference>
<dbReference type="InterPro" id="IPR001849">
    <property type="entry name" value="PH_domain"/>
</dbReference>
<dbReference type="InterPro" id="IPR008937">
    <property type="entry name" value="Ras-like_GEF"/>
</dbReference>
<dbReference type="InterPro" id="IPR000651">
    <property type="entry name" value="Ras-like_Gua-exchang_fac_N"/>
</dbReference>
<dbReference type="InterPro" id="IPR019804">
    <property type="entry name" value="Ras_G-nucl-exch_fac_CS"/>
</dbReference>
<dbReference type="InterPro" id="IPR023578">
    <property type="entry name" value="Ras_GEF_dom_sf"/>
</dbReference>
<dbReference type="InterPro" id="IPR001895">
    <property type="entry name" value="RASGEF_cat_dom"/>
</dbReference>
<dbReference type="InterPro" id="IPR036964">
    <property type="entry name" value="RASGEF_cat_dom_sf"/>
</dbReference>
<dbReference type="PANTHER" id="PTHR23113">
    <property type="entry name" value="GUANINE NUCLEOTIDE EXCHANGE FACTOR"/>
    <property type="match status" value="1"/>
</dbReference>
<dbReference type="PANTHER" id="PTHR23113:SF193">
    <property type="entry name" value="RAS-SPECIFIC GUANINE NUCLEOTIDE-RELEASING FACTOR 1"/>
    <property type="match status" value="1"/>
</dbReference>
<dbReference type="Pfam" id="PF00169">
    <property type="entry name" value="PH"/>
    <property type="match status" value="2"/>
</dbReference>
<dbReference type="Pfam" id="PF00617">
    <property type="entry name" value="RasGEF"/>
    <property type="match status" value="1"/>
</dbReference>
<dbReference type="Pfam" id="PF00618">
    <property type="entry name" value="RasGEF_N"/>
    <property type="match status" value="1"/>
</dbReference>
<dbReference type="Pfam" id="PF00621">
    <property type="entry name" value="RhoGEF"/>
    <property type="match status" value="1"/>
</dbReference>
<dbReference type="SMART" id="SM00233">
    <property type="entry name" value="PH"/>
    <property type="match status" value="2"/>
</dbReference>
<dbReference type="SMART" id="SM00147">
    <property type="entry name" value="RasGEF"/>
    <property type="match status" value="1"/>
</dbReference>
<dbReference type="SMART" id="SM00229">
    <property type="entry name" value="RasGEFN"/>
    <property type="match status" value="2"/>
</dbReference>
<dbReference type="SMART" id="SM00325">
    <property type="entry name" value="RhoGEF"/>
    <property type="match status" value="1"/>
</dbReference>
<dbReference type="SUPFAM" id="SSF48065">
    <property type="entry name" value="DBL homology domain (DH-domain)"/>
    <property type="match status" value="1"/>
</dbReference>
<dbReference type="SUPFAM" id="SSF50729">
    <property type="entry name" value="PH domain-like"/>
    <property type="match status" value="2"/>
</dbReference>
<dbReference type="SUPFAM" id="SSF48366">
    <property type="entry name" value="Ras GEF"/>
    <property type="match status" value="1"/>
</dbReference>
<dbReference type="PROSITE" id="PS00741">
    <property type="entry name" value="DH_1"/>
    <property type="match status" value="1"/>
</dbReference>
<dbReference type="PROSITE" id="PS50010">
    <property type="entry name" value="DH_2"/>
    <property type="match status" value="1"/>
</dbReference>
<dbReference type="PROSITE" id="PS50096">
    <property type="entry name" value="IQ"/>
    <property type="match status" value="1"/>
</dbReference>
<dbReference type="PROSITE" id="PS50003">
    <property type="entry name" value="PH_DOMAIN"/>
    <property type="match status" value="2"/>
</dbReference>
<dbReference type="PROSITE" id="PS00720">
    <property type="entry name" value="RASGEF"/>
    <property type="match status" value="1"/>
</dbReference>
<dbReference type="PROSITE" id="PS50009">
    <property type="entry name" value="RASGEF_CAT"/>
    <property type="match status" value="1"/>
</dbReference>
<dbReference type="PROSITE" id="PS50212">
    <property type="entry name" value="RASGEF_NTER"/>
    <property type="match status" value="1"/>
</dbReference>
<reference key="1">
    <citation type="journal article" date="1992" name="EMBO J.">
        <title>Isolation of multiple mouse cDNAs with coding homology to Saccharomyces cerevisiae CDC25: identification of a region related to Bcr, Vav, Dbl and CDC24.</title>
        <authorList>
            <person name="Cen H."/>
            <person name="Lowy D.D."/>
        </authorList>
    </citation>
    <scope>NUCLEOTIDE SEQUENCE [MRNA]</scope>
    <source>
        <strain>BALB/cJ</strain>
    </source>
</reference>
<reference key="2">
    <citation type="journal article" date="1992" name="EMBO J.">
        <title>Cloning by functional complementation of a mouse cDNA encoding a homologue of CDC25, a Saccharomyces cerevisiae RAS activator.</title>
        <authorList>
            <person name="Martegani E."/>
            <person name="Vanoni M."/>
            <person name="Zippel R."/>
            <person name="Coccetti P."/>
            <person name="Brambilla R."/>
            <person name="Ferrari C."/>
            <person name="Sturani E.P."/>
            <person name="Alberghina L."/>
        </authorList>
    </citation>
    <scope>NUCLEOTIDE SEQUENCE [MRNA] OF 791-1262</scope>
    <source>
        <strain>SWR/J</strain>
        <tissue>Brain</tissue>
    </source>
</reference>
<reference key="3">
    <citation type="journal article" date="1992" name="Proc. Natl. Acad. Sci. U.S.A.">
        <title>Identification of a mammalian gene structurally and functionally related to the CDC25 gene of Saccharomyces cerevisiae.</title>
        <authorList>
            <person name="Wei W."/>
            <person name="Mosteller R.D."/>
            <person name="Sanyal P."/>
            <person name="Gonzales E."/>
            <person name="McKinney D."/>
            <person name="Dasgupta C."/>
            <person name="Li P."/>
            <person name="Liu B.-X."/>
            <person name="Broek D."/>
        </authorList>
    </citation>
    <scope>NUCLEOTIDE SEQUENCE [MRNA] OF 1031-1226</scope>
</reference>
<reference key="4">
    <citation type="journal article" date="1999" name="Mol. Cell. Biol.">
        <title>Ras-specific exchange factor GRF: oligomerization through its Dbl homology domain and calcium-dependent activation of Raf.</title>
        <authorList>
            <person name="Anborgh P.H."/>
            <person name="Qian X."/>
            <person name="Papageorge A.G."/>
            <person name="Vass W.C."/>
            <person name="DeClue J.E."/>
            <person name="Lowy D.R."/>
        </authorList>
    </citation>
    <scope>FUNCTION</scope>
    <scope>OLIGOMERIZATION</scope>
    <scope>INTERACTION WITH RASGRF2</scope>
    <scope>MUTAGENESIS OF LEU-263 AND 394-LEU--LEU-400</scope>
</reference>
<reference key="5">
    <citation type="journal article" date="2001" name="J. Biol. Chem.">
        <title>Cloning and characterization of mouse UBPy, a deubiquitinating enzyme that interacts with the ras guanine nucleotide exchange factor CDC25(Mm)/Ras-GRF1.</title>
        <authorList>
            <person name="Gnesutta N."/>
            <person name="Ceriani M."/>
            <person name="Innocenti M."/>
            <person name="Mauri I."/>
            <person name="Zippel R."/>
            <person name="Sturani E."/>
            <person name="Borgonovo B."/>
            <person name="Berruti G."/>
            <person name="Martegani E."/>
        </authorList>
    </citation>
    <scope>UBIQUITINATION</scope>
    <scope>INTERACTION WITH USP8</scope>
</reference>
<reference key="6">
    <citation type="journal article" date="2010" name="Cell">
        <title>A tissue-specific atlas of mouse protein phosphorylation and expression.</title>
        <authorList>
            <person name="Huttlin E.L."/>
            <person name="Jedrychowski M.P."/>
            <person name="Elias J.E."/>
            <person name="Goswami T."/>
            <person name="Rad R."/>
            <person name="Beausoleil S.A."/>
            <person name="Villen J."/>
            <person name="Haas W."/>
            <person name="Sowa M.E."/>
            <person name="Gygi S.P."/>
        </authorList>
    </citation>
    <scope>PHOSPHORYLATION [LARGE SCALE ANALYSIS] AT SER-745</scope>
    <scope>IDENTIFICATION BY MASS SPECTROMETRY [LARGE SCALE ANALYSIS]</scope>
    <source>
        <tissue>Brain</tissue>
    </source>
</reference>
<evidence type="ECO:0000250" key="1"/>
<evidence type="ECO:0000250" key="2">
    <source>
        <dbReference type="UniProtKB" id="P28818"/>
    </source>
</evidence>
<evidence type="ECO:0000255" key="3">
    <source>
        <dbReference type="PROSITE-ProRule" id="PRU00062"/>
    </source>
</evidence>
<evidence type="ECO:0000255" key="4">
    <source>
        <dbReference type="PROSITE-ProRule" id="PRU00116"/>
    </source>
</evidence>
<evidence type="ECO:0000255" key="5">
    <source>
        <dbReference type="PROSITE-ProRule" id="PRU00135"/>
    </source>
</evidence>
<evidence type="ECO:0000255" key="6">
    <source>
        <dbReference type="PROSITE-ProRule" id="PRU00145"/>
    </source>
</evidence>
<evidence type="ECO:0000255" key="7">
    <source>
        <dbReference type="PROSITE-ProRule" id="PRU00168"/>
    </source>
</evidence>
<evidence type="ECO:0000256" key="8">
    <source>
        <dbReference type="SAM" id="MobiDB-lite"/>
    </source>
</evidence>
<evidence type="ECO:0000269" key="9">
    <source>
    </source>
</evidence>
<evidence type="ECO:0000269" key="10">
    <source>
    </source>
</evidence>
<evidence type="ECO:0000305" key="11"/>
<evidence type="ECO:0000305" key="12">
    <source>
    </source>
</evidence>
<evidence type="ECO:0007744" key="13">
    <source>
    </source>
</evidence>
<evidence type="ECO:0007829" key="14">
    <source>
        <dbReference type="PDB" id="2IJE"/>
    </source>
</evidence>
<accession>P27671</accession>
<comment type="function">
    <text evidence="9">Promotes the exchange of Ras-bound GDP by GTP.</text>
</comment>
<comment type="subunit">
    <text evidence="9 10">Homooligomer and heterooligomer with RASGRF2. Interacts with USP8, thereby regulating its stability.</text>
</comment>
<comment type="interaction">
    <interactant intactId="EBI-645522">
        <id>P27671</id>
    </interactant>
    <interactant intactId="EBI-78814">
        <id>P12023</id>
        <label>App</label>
    </interactant>
    <organismsDiffer>false</organismsDiffer>
    <experiments>2</experiments>
</comment>
<comment type="interaction">
    <interactant intactId="EBI-645522">
        <id>P27671</id>
    </interactant>
    <interactant intactId="EBI-350145">
        <id>P01112</id>
        <label>HRAS</label>
    </interactant>
    <organismsDiffer>true</organismsDiffer>
    <experiments>2</experiments>
</comment>
<comment type="tissue specificity">
    <text>Brain.</text>
</comment>
<comment type="domain">
    <text>The DH (DBL-homology) domain mediates interaction with RASGRF2.</text>
</comment>
<comment type="PTM">
    <text evidence="1">Phosphorylated by PLK2, leading to ubiquitination and degradation by the proteasome.</text>
</comment>
<comment type="PTM">
    <text evidence="12">Ubiquitinated and degraded following phosphorylation by PLK2.</text>
</comment>
<comment type="PTM">
    <text evidence="1">Phosphorylated by SRC and LCK. Phosphorylation by LCK increases its capacity to stimulate the GDP/GTP exchange on Ras, whereas its phosphorylation by SRC seems not to have an effect on stimulation activity (By similarity).</text>
</comment>
<proteinExistence type="evidence at protein level"/>
<sequence length="1262" mass="144102">MQKAIRLNDGHVVTLGLLAQKDGTRKGYLSKRSADNPKWQTKWFALLQNLLFYFESDSSPRPSGLYLLEGSICKRAPSPKRGTSSKESGEKQQHYFTVNFSNDSQKTLELRTEDAKDCDEWVAAIARASYKILATEHEALMQKYLHLLQVVETEKTVAKQLRQQLEDGEVEIERLKTEVTITNLIKDNDRIQSSNKAGSADDEDSDIKKIKKVQSFLRGWLCRRKWKNIIQDYIRSPHADSMRKRNQVVFSMLEAEAEYVQQLHILVNNFLRPLRMAASSKKPPITHDDVSSIFLNSETIMFLHQIFYQGLKARISSWPTLVLADLFDILLPMLNIYQEFVRNHQYSLQILAHCKQNRDFDKLLKQYEAKPDCEERTLETFLTYPMFQIPRYILTLHELLAHTPHEHVERNSLDYAKSKLEELSRIMHDEVSETENIRKNLAIERMITEGCEILLDTSQTFVRQGSLMQMSLSEKSKSSRGRLGSLSTKKEGERQCFLFSKHLIICTRGSGGKLHLTKNGVISLIDCTLLDEPENLDDEAKGAGPEIEHLEFKIGVEPKDSLPFTVILVASTRQEKAAWTSDIIQCVDNIRCNGLMMNAFEENSKVTVPQMIKSDASLYCDDVDIRFSKTMNSCKVLQIRYASVERLLERLTDLRFLSIDFLNTFLHSYRVFTNAMVVLDKLINIYRKPMSAIPARSLELLFSSSHNAKLLYGDAPKSPRASRKFSSPPPLAIGTSSPSRRRKLSLNIPIITGGKALELASLGCSSDSYANIHSPISPFGKTTLDTGKLCMASSLPKTPEEIDVPATIPEKPGELSASRKHSSDVLKEESEDDQNHSDEDNTEVSPVKSPPTPKSFLNRTITEFPFFNYNNGILMTTCRDLVDNNRSTLSATSAFAIATAGANEGPSNKEVFRRMSLANTGFSSDQRNIDKEFVIRRAATNRVLNVLRHWVTKHTQDFDTDDTLKYRVICFLEEVMHDPDLLTQERKAAANIIRTLTLEETTEQHSMLEEVILMTEGVKTEPFENHPALEIAEQLTLLDHLVFKSIPYEEFFGQGWMKAEKYERTPYIMKTTKHFNHVSNFIASEIIRNEDISARASAIEKWVAVADICRCLHNYNAVLEITSSINRSAIFRLKKTWLKVSKQTKSLLDKLQKLVSSDGRFKNLRESLRNCDPPCVPYLGMYLTDLVFIEEGTPNYTEDGLVNFSKMRMISHIIREIRQFQQTTYKIDPQPKVIQYLLDESFMLDEESLYESSLLIEPKLPT</sequence>